<feature type="chain" id="PRO_0000233972" description="Putative late blight resistance protein homolog R1B-23">
    <location>
        <begin position="1"/>
        <end position="1262"/>
    </location>
</feature>
<feature type="domain" description="NB-ARC">
    <location>
        <begin position="475"/>
        <end position="761"/>
    </location>
</feature>
<feature type="repeat" description="LRR 1">
    <location>
        <begin position="890"/>
        <end position="914"/>
    </location>
</feature>
<feature type="repeat" description="LRR 2">
    <location>
        <begin position="933"/>
        <end position="961"/>
    </location>
</feature>
<feature type="repeat" description="LRR 3">
    <location>
        <begin position="1036"/>
        <end position="1059"/>
    </location>
</feature>
<feature type="repeat" description="LRR 4">
    <location>
        <begin position="1064"/>
        <end position="1083"/>
    </location>
</feature>
<feature type="repeat" description="LRR 5">
    <location>
        <begin position="1084"/>
        <end position="1112"/>
    </location>
</feature>
<feature type="repeat" description="LRR 6">
    <location>
        <begin position="1133"/>
        <end position="1157"/>
    </location>
</feature>
<feature type="domain" description="HMA" evidence="3">
    <location>
        <begin position="1181"/>
        <end position="1248"/>
    </location>
</feature>
<feature type="coiled-coil region" evidence="2">
    <location>
        <begin position="364"/>
        <end position="384"/>
    </location>
</feature>
<feature type="coiled-coil region" evidence="2">
    <location>
        <begin position="475"/>
        <end position="496"/>
    </location>
</feature>
<feature type="binding site" evidence="2">
    <location>
        <begin position="508"/>
        <end position="515"/>
    </location>
    <ligand>
        <name>ATP</name>
        <dbReference type="ChEBI" id="CHEBI:30616"/>
    </ligand>
</feature>
<sequence>MIEFWKSEYTRILSICHDSGTQYRNKNVRMRSLYLEKVWVAFKSFAYWKEVIWKTKQEFRAQYSFPKTSLEANKVDDANTHSPKFVMEVIDVFVENLNDLMKINDPSSWLFVPGHMKEQIEKVLKELKLLRFFVCFVSNKCIQPQYQHTTFYTHALIEASHNAMVVWLHLPVYGIGNQDLAPSEVSRLLSDFMEMKIKSIQPGISRNSIYIDVLQALKSTIPQAQQKHVAESGIVEIPTHSLTVGLSDQMANLQEMLCLLRDNLIHLPILDLEFHLQDMDSVIVDAGLLIYSLYDIKGEKEDTILEDIKRELGFDLPRNIEPIKVMVYLVMQKAFQCNLPRIHGLGYVDFLLKNLKDFQGRYSDSLAFLKNQLQVIQTKFESMQPFLKVVVEEPHNKLKTLNEDCATQIIRKAYEVEYVVDACINKEVPQWCIERWLLDIIEEITCIKEKIQEKNTVEDTMKSVIASSQLARTPRMNEEIVGFEDVIETLRKKLLNGTKGQDVISMHGMPGLGKTTLANRLYSDRSVVSQFDICAQCCVSQVYSYKDLLLALLRDAIGEGSVRTELHANELADMLRKTLLPRRYLILVDDVWENSVWDDLSGCFPDVNNRSRIILTTRHHEVAKYASVHSDPLHLRMFDEVESWKLLEKKVFGEESCSPLLRDIGQRIAKMCGQLPLSIVLVAGILSEMEKEVECWEQVANNLGTHIHNDSRAVVDQSYHVLPCHLKSCFLYFGAFLEDRVIDIPRLIRLWISESFIKSCEGRSLEDIAEGYLENLIGRNLVMVTQRDDSDGKVKACRLHDVLLDFCKERAAEENFLLWINRDQITKPSSCVYSHNQHAHLAFTDMKNLVEWSASCSCVGSVLFKNYDPYFAGRPLSSHAFSISRILLNFKFLKVLDLEHQVVIDSIPTELFYLRYISAHIEQNSIPSSISNLWNLETLILNRTSAATGKTLLLPSTVWDMVKLRHLHIPKFSPENKKALLENSARLDDLETLFNPYFTRVEDAELMLRKTPNLRKLICEVQCLEYPHQYHVLNFPIRLEMLKLHQSNIFKPISFCISAPNLKYLELSGFYLDSQYLSETADHLKHLEVLKLYYVEFGDHREWKVSNGMFPQLKILKLKCVSLLKWIVADDAFPNLEQLVLRRCRHLMEIPSCFMDILSLQYIEVENCNESVVKSAMNIQETQVEDNQNTNFKLVLIEIHLFCLFDMKGIESISTDMKEKKLTVTRDVDADEVQLVVEKLRNVAYADEVQLVVEKLRKRGML</sequence>
<keyword id="KW-0067">ATP-binding</keyword>
<keyword id="KW-0175">Coiled coil</keyword>
<keyword id="KW-0963">Cytoplasm</keyword>
<keyword id="KW-0381">Hypersensitive response</keyword>
<keyword id="KW-0433">Leucine-rich repeat</keyword>
<keyword id="KW-0472">Membrane</keyword>
<keyword id="KW-0547">Nucleotide-binding</keyword>
<keyword id="KW-0611">Plant defense</keyword>
<keyword id="KW-0677">Repeat</keyword>
<gene>
    <name type="primary">R1B-23</name>
    <name type="ORF">PGEC517A09.9</name>
</gene>
<accession>Q6L3L0</accession>
<protein>
    <recommendedName>
        <fullName>Putative late blight resistance protein homolog R1B-23</fullName>
    </recommendedName>
</protein>
<name>R1B23_SOLDE</name>
<reference key="1">
    <citation type="journal article" date="2005" name="Plant J.">
        <title>The R1 resistance gene cluster contains three groups of independently evolving, type I R1 homologues and shows substantial structural variation among haplotypes of Solanum demissum.</title>
        <authorList>
            <person name="Kuang H."/>
            <person name="Wei F."/>
            <person name="Marano M.R."/>
            <person name="Wirtz U."/>
            <person name="Wang X."/>
            <person name="Liu J."/>
            <person name="Shum W.P."/>
            <person name="Zaborsky J."/>
            <person name="Tallon L.J."/>
            <person name="Rensink W."/>
            <person name="Lobst S."/>
            <person name="Zhang P."/>
            <person name="Tornqvist C.-E."/>
            <person name="Tek A."/>
            <person name="Bamberg J."/>
            <person name="Helgeson J."/>
            <person name="Fry W."/>
            <person name="You F."/>
            <person name="Luo M.-C."/>
            <person name="Jiang J."/>
            <person name="Buell C.R."/>
            <person name="Baker B."/>
        </authorList>
    </citation>
    <scope>NUCLEOTIDE SEQUENCE [GENOMIC DNA]</scope>
</reference>
<proteinExistence type="inferred from homology"/>
<evidence type="ECO:0000250" key="1"/>
<evidence type="ECO:0000255" key="2"/>
<evidence type="ECO:0000255" key="3">
    <source>
        <dbReference type="PROSITE-ProRule" id="PRU00280"/>
    </source>
</evidence>
<evidence type="ECO:0000305" key="4"/>
<dbReference type="EMBL" id="AC149301">
    <property type="protein sequence ID" value="AAT39284.1"/>
    <property type="molecule type" value="Genomic_DNA"/>
</dbReference>
<dbReference type="SMR" id="Q6L3L0"/>
<dbReference type="GO" id="GO:0005737">
    <property type="term" value="C:cytoplasm"/>
    <property type="evidence" value="ECO:0007669"/>
    <property type="project" value="UniProtKB-SubCell"/>
</dbReference>
<dbReference type="GO" id="GO:0016020">
    <property type="term" value="C:membrane"/>
    <property type="evidence" value="ECO:0007669"/>
    <property type="project" value="UniProtKB-SubCell"/>
</dbReference>
<dbReference type="GO" id="GO:0043531">
    <property type="term" value="F:ADP binding"/>
    <property type="evidence" value="ECO:0007669"/>
    <property type="project" value="InterPro"/>
</dbReference>
<dbReference type="GO" id="GO:0005524">
    <property type="term" value="F:ATP binding"/>
    <property type="evidence" value="ECO:0007669"/>
    <property type="project" value="UniProtKB-KW"/>
</dbReference>
<dbReference type="GO" id="GO:0046872">
    <property type="term" value="F:metal ion binding"/>
    <property type="evidence" value="ECO:0007669"/>
    <property type="project" value="InterPro"/>
</dbReference>
<dbReference type="GO" id="GO:0009626">
    <property type="term" value="P:plant-type hypersensitive response"/>
    <property type="evidence" value="ECO:0007669"/>
    <property type="project" value="UniProtKB-KW"/>
</dbReference>
<dbReference type="CDD" id="cd14798">
    <property type="entry name" value="RX-CC_like"/>
    <property type="match status" value="1"/>
</dbReference>
<dbReference type="FunFam" id="3.40.50.300:FF:001091">
    <property type="entry name" value="Probable disease resistance protein At1g61300"/>
    <property type="match status" value="1"/>
</dbReference>
<dbReference type="FunFam" id="1.10.10.10:FF:000322">
    <property type="entry name" value="Probable disease resistance protein At1g63360"/>
    <property type="match status" value="1"/>
</dbReference>
<dbReference type="Gene3D" id="1.10.8.430">
    <property type="entry name" value="Helical domain of apoptotic protease-activating factors"/>
    <property type="match status" value="1"/>
</dbReference>
<dbReference type="Gene3D" id="3.40.50.300">
    <property type="entry name" value="P-loop containing nucleotide triphosphate hydrolases"/>
    <property type="match status" value="1"/>
</dbReference>
<dbReference type="Gene3D" id="3.80.10.10">
    <property type="entry name" value="Ribonuclease Inhibitor"/>
    <property type="match status" value="1"/>
</dbReference>
<dbReference type="Gene3D" id="1.10.10.10">
    <property type="entry name" value="Winged helix-like DNA-binding domain superfamily/Winged helix DNA-binding domain"/>
    <property type="match status" value="1"/>
</dbReference>
<dbReference type="InterPro" id="IPR042197">
    <property type="entry name" value="Apaf_helical"/>
</dbReference>
<dbReference type="InterPro" id="IPR044974">
    <property type="entry name" value="Disease_R_plants"/>
</dbReference>
<dbReference type="InterPro" id="IPR006121">
    <property type="entry name" value="HMA_dom"/>
</dbReference>
<dbReference type="InterPro" id="IPR032675">
    <property type="entry name" value="LRR_dom_sf"/>
</dbReference>
<dbReference type="InterPro" id="IPR002182">
    <property type="entry name" value="NB-ARC"/>
</dbReference>
<dbReference type="InterPro" id="IPR027417">
    <property type="entry name" value="P-loop_NTPase"/>
</dbReference>
<dbReference type="InterPro" id="IPR021929">
    <property type="entry name" value="R1A-like_N"/>
</dbReference>
<dbReference type="InterPro" id="IPR038005">
    <property type="entry name" value="RX-like_CC"/>
</dbReference>
<dbReference type="InterPro" id="IPR036388">
    <property type="entry name" value="WH-like_DNA-bd_sf"/>
</dbReference>
<dbReference type="PANTHER" id="PTHR23155:SF1152">
    <property type="entry name" value="AAA+ ATPASE DOMAIN-CONTAINING PROTEIN"/>
    <property type="match status" value="1"/>
</dbReference>
<dbReference type="PANTHER" id="PTHR23155">
    <property type="entry name" value="DISEASE RESISTANCE PROTEIN RP"/>
    <property type="match status" value="1"/>
</dbReference>
<dbReference type="Pfam" id="PF00931">
    <property type="entry name" value="NB-ARC"/>
    <property type="match status" value="1"/>
</dbReference>
<dbReference type="Pfam" id="PF12061">
    <property type="entry name" value="NB-LRR"/>
    <property type="match status" value="1"/>
</dbReference>
<dbReference type="Pfam" id="PF23559">
    <property type="entry name" value="WH_DRP"/>
    <property type="match status" value="1"/>
</dbReference>
<dbReference type="PRINTS" id="PR00364">
    <property type="entry name" value="DISEASERSIST"/>
</dbReference>
<dbReference type="SUPFAM" id="SSF52058">
    <property type="entry name" value="L domain-like"/>
    <property type="match status" value="1"/>
</dbReference>
<dbReference type="SUPFAM" id="SSF52540">
    <property type="entry name" value="P-loop containing nucleoside triphosphate hydrolases"/>
    <property type="match status" value="1"/>
</dbReference>
<dbReference type="PROSITE" id="PS50846">
    <property type="entry name" value="HMA_2"/>
    <property type="match status" value="1"/>
</dbReference>
<comment type="function">
    <text>Confers resistance to late blight (Phytophthora infestans) races carrying the avirulence gene Avr1. Resistance proteins guard the plant against pathogens that contain an appropriate avirulence protein via an indirect interaction with this avirulence protein. That triggers a defense system including the hypersensitive response, which restricts the pathogen growth.</text>
</comment>
<comment type="subcellular location">
    <subcellularLocation>
        <location evidence="1">Cytoplasm</location>
    </subcellularLocation>
    <subcellularLocation>
        <location evidence="1">Membrane</location>
        <topology evidence="1">Peripheral membrane protein</topology>
    </subcellularLocation>
</comment>
<comment type="miscellaneous">
    <text>This protein is encoded by the haplotype B genome of the allohexaploid Solanum demissum.</text>
</comment>
<comment type="similarity">
    <text evidence="4">Belongs to the disease resistance NB-LRR family.</text>
</comment>
<organism>
    <name type="scientific">Solanum demissum</name>
    <name type="common">Wild potato</name>
    <dbReference type="NCBI Taxonomy" id="50514"/>
    <lineage>
        <taxon>Eukaryota</taxon>
        <taxon>Viridiplantae</taxon>
        <taxon>Streptophyta</taxon>
        <taxon>Embryophyta</taxon>
        <taxon>Tracheophyta</taxon>
        <taxon>Spermatophyta</taxon>
        <taxon>Magnoliopsida</taxon>
        <taxon>eudicotyledons</taxon>
        <taxon>Gunneridae</taxon>
        <taxon>Pentapetalae</taxon>
        <taxon>asterids</taxon>
        <taxon>lamiids</taxon>
        <taxon>Solanales</taxon>
        <taxon>Solanaceae</taxon>
        <taxon>Solanoideae</taxon>
        <taxon>Solaneae</taxon>
        <taxon>Solanum</taxon>
    </lineage>
</organism>